<dbReference type="SMR" id="P0DUT1"/>
<dbReference type="GO" id="GO:0005576">
    <property type="term" value="C:extracellular region"/>
    <property type="evidence" value="ECO:0007669"/>
    <property type="project" value="UniProtKB-SubCell"/>
</dbReference>
<dbReference type="GO" id="GO:0090729">
    <property type="term" value="F:toxin activity"/>
    <property type="evidence" value="ECO:0007669"/>
    <property type="project" value="UniProtKB-KW"/>
</dbReference>
<reference key="1">
    <citation type="journal article" date="2021" name="Proc. Natl. Acad. Sci. U.S.A.">
        <title>Production, composition, and mode of action of the painful defensive venom produced by a limacodid caterpillar, Doratifera vulnerans.</title>
        <authorList>
            <person name="Walker A.A."/>
            <person name="Robinson S.D."/>
            <person name="Paluzzi J.V."/>
            <person name="Merritt D.J."/>
            <person name="Nixon S.A."/>
            <person name="Schroeder C.I."/>
            <person name="Jin J."/>
            <person name="Goudarzi M.H."/>
            <person name="Kotze A.C."/>
            <person name="Dekan Z."/>
            <person name="Sombke A."/>
            <person name="Alewood P.F."/>
            <person name="Fry B.G."/>
            <person name="Epstein M.E."/>
            <person name="Vetter I."/>
            <person name="King G.F."/>
        </authorList>
    </citation>
    <scope>NUCLEOTIDE SEQUENCE [MRNA]</scope>
    <scope>PROTEIN SEQUENCE OF 20-36</scope>
    <scope>FUNCTION</scope>
    <scope>SUBCELLULAR LOCATION</scope>
    <scope>TOXIC DOSE</scope>
    <scope>MASS SPECTROMETRY</scope>
    <source>
        <tissue>Venom</tissue>
    </source>
</reference>
<organism>
    <name type="scientific">Doratifera vulnerans</name>
    <name type="common">Mottled cup moth</name>
    <dbReference type="NCBI Taxonomy" id="1372962"/>
    <lineage>
        <taxon>Eukaryota</taxon>
        <taxon>Metazoa</taxon>
        <taxon>Ecdysozoa</taxon>
        <taxon>Arthropoda</taxon>
        <taxon>Hexapoda</taxon>
        <taxon>Insecta</taxon>
        <taxon>Pterygota</taxon>
        <taxon>Neoptera</taxon>
        <taxon>Endopterygota</taxon>
        <taxon>Lepidoptera</taxon>
        <taxon>Glossata</taxon>
        <taxon>Ditrysia</taxon>
        <taxon>Zygaenoidea</taxon>
        <taxon>Limacodidae</taxon>
        <taxon>Doratifera</taxon>
    </lineage>
</organism>
<proteinExistence type="evidence at protein level"/>
<protein>
    <recommendedName>
        <fullName evidence="2">U-limacoditoxin(7)-Dv63</fullName>
        <shortName evidence="2">U-LCTX(7)-Dv63</shortName>
    </recommendedName>
    <alternativeName>
        <fullName evidence="2">Cecropin-like peptide</fullName>
    </alternativeName>
    <alternativeName>
        <fullName evidence="2">Vulnericin</fullName>
    </alternativeName>
</protein>
<sequence>MFKPRVILLITIIAVFSEFKKAFKGLFEKAANKYLH</sequence>
<keyword id="KW-0903">Direct protein sequencing</keyword>
<keyword id="KW-0964">Secreted</keyword>
<keyword id="KW-0732">Signal</keyword>
<keyword id="KW-0800">Toxin</keyword>
<evidence type="ECO:0000269" key="1">
    <source>
    </source>
</evidence>
<evidence type="ECO:0000303" key="2">
    <source>
    </source>
</evidence>
<evidence type="ECO:0000305" key="3"/>
<evidence type="ECO:0000305" key="4">
    <source>
    </source>
</evidence>
<name>U763_DORVU</name>
<accession>P0DUT1</accession>
<comment type="function">
    <text evidence="1">Peptide with insecticidal and antiparasitic activities. Induces irreversible paralysis in D.melanogaster when tested at high doses. It shows a moderate antiparasitic activity against the major pathogenic nematode of ruminants (H.contortus, EC(50)=41.3 uM). Does not show antimicrobial activities. Does not induce increase in intracellular calcium in mouse DRG neurons, suggesting that it does not induce pain.</text>
</comment>
<comment type="subcellular location">
    <subcellularLocation>
        <location evidence="1">Secreted</location>
    </subcellularLocation>
</comment>
<comment type="tissue specificity">
    <text evidence="4">Expressed by the venom secretory cell of the spine. The spine is a cuticular structure containing a single large nucleated venom-secreting cell at its base. It is an independent unit capable of producing, storing and injecting venom. On the back of D.vulnerans caterpillars, spines are grouped together by 50 to 100 to form scoli, of which there are eight in D.vulnerans.</text>
</comment>
<comment type="developmental stage">
    <text evidence="1">Only secreted by larvae. Adult moth do not have spines.</text>
</comment>
<comment type="mass spectrometry">
    <text>Monoisotopic mass.</text>
</comment>
<comment type="toxic dose">
    <text evidence="1">PD(50) is 10.27 nmol/g when injected into D.melanogaster.</text>
</comment>
<comment type="similarity">
    <text evidence="3">Belongs to the limacoditoxin-7 family.</text>
</comment>
<feature type="signal peptide" evidence="1">
    <location>
        <begin position="1"/>
        <end position="19"/>
    </location>
</feature>
<feature type="peptide" id="PRO_0000453407" description="U-limacoditoxin(7)-Dv63" evidence="1">
    <location>
        <begin position="20"/>
        <end position="36"/>
    </location>
</feature>